<accession>Q60HC2</accession>
<accession>Q4R582</accession>
<protein>
    <recommendedName>
        <fullName>Tubulin beta-3 chain</fullName>
    </recommendedName>
    <alternativeName>
        <fullName>Tubulin beta-4 chain</fullName>
    </alternativeName>
</protein>
<organism>
    <name type="scientific">Macaca fascicularis</name>
    <name type="common">Crab-eating macaque</name>
    <name type="synonym">Cynomolgus monkey</name>
    <dbReference type="NCBI Taxonomy" id="9541"/>
    <lineage>
        <taxon>Eukaryota</taxon>
        <taxon>Metazoa</taxon>
        <taxon>Chordata</taxon>
        <taxon>Craniata</taxon>
        <taxon>Vertebrata</taxon>
        <taxon>Euteleostomi</taxon>
        <taxon>Mammalia</taxon>
        <taxon>Eutheria</taxon>
        <taxon>Euarchontoglires</taxon>
        <taxon>Primates</taxon>
        <taxon>Haplorrhini</taxon>
        <taxon>Catarrhini</taxon>
        <taxon>Cercopithecidae</taxon>
        <taxon>Cercopithecinae</taxon>
        <taxon>Macaca</taxon>
    </lineage>
</organism>
<keyword id="KW-0966">Cell projection</keyword>
<keyword id="KW-0963">Cytoplasm</keyword>
<keyword id="KW-0206">Cytoskeleton</keyword>
<keyword id="KW-0342">GTP-binding</keyword>
<keyword id="KW-1017">Isopeptide bond</keyword>
<keyword id="KW-0460">Magnesium</keyword>
<keyword id="KW-0479">Metal-binding</keyword>
<keyword id="KW-0493">Microtubule</keyword>
<keyword id="KW-0547">Nucleotide-binding</keyword>
<keyword id="KW-0597">Phosphoprotein</keyword>
<keyword id="KW-1185">Reference proteome</keyword>
<proteinExistence type="evidence at transcript level"/>
<comment type="function">
    <text evidence="4">Tubulin is the major constituent of microtubules, protein filaments consisting of alpha- and beta-tubulin heterodimers (By similarity). Microtubules grow by the addition of GTP-tubulin dimers to the microtubule end, where a stabilizing cap forms (By similarity). Below the cap, alpha-beta tubulin heterodimers are in GDP-bound state, owing to GTPase activity of alpha-tubulin (By similarity). TUBB3 plays a critical role in proper axon guidance and maintenance (By similarity). Binding of NTN1/Netrin-1 to its receptor UNC5C might cause dissociation of UNC5C from polymerized TUBB3 in microtubules and thereby lead to increased microtubule dynamics and axon repulsion (By similarity). Plays a role in dorsal root ganglion axon projection towards the spinal cord (By similarity).</text>
</comment>
<comment type="cofactor">
    <cofactor evidence="3">
        <name>Mg(2+)</name>
        <dbReference type="ChEBI" id="CHEBI:18420"/>
    </cofactor>
</comment>
<comment type="subunit">
    <text evidence="4 7">Heterodimer of alpha- and beta-tubulin (By similarity). A typical microtubule is a hollow water-filled tube with an outer diameter of 25 nm and an inner diameter of 15 nM (By similarity). Alpha-beta heterodimers associate head-to-tail to form protofilaments running lengthwise along the microtubule wall with the beta-tubulin subunit facing the microtubule plus end conferring a structural polarity (By similarity). Microtubules usually have 13 protofilaments but different protofilament numbers can be found in some organisms and specialized cells (By similarity). Interacts with gamma-tubulin; the interaction allows microtubules to nucleate from the gamma-tubulin ring complex (gTuRC) (By similarity). Interacts with UNC5C (via cytoplasmic domain); this interaction is decreased by NTN1/Netrin-1 (By similarity). Interacts with NLRP5/MATER at cytoskeleton microtubules (By similarity). Interacts with DPYSL5 (By similarity). Interacts with CFAP61 (By similarity).</text>
</comment>
<comment type="subcellular location">
    <subcellularLocation>
        <location evidence="7">Cytoplasm</location>
        <location evidence="7">Cytoskeleton</location>
    </subcellularLocation>
    <subcellularLocation>
        <location evidence="7">Cell projection</location>
        <location evidence="7">Growth cone</location>
    </subcellularLocation>
    <subcellularLocation>
        <location evidence="7">Cell projection</location>
        <location evidence="7">Lamellipodium</location>
    </subcellularLocation>
    <subcellularLocation>
        <location evidence="7">Cell projection</location>
        <location evidence="7">Filopodium</location>
    </subcellularLocation>
</comment>
<comment type="domain">
    <text evidence="1">The highly acidic C-terminal region may bind cations such as calcium.</text>
</comment>
<comment type="domain">
    <text evidence="2">The MREI motif is common among all beta-tubulin isoforms and may be critical for tubulin autoregulation.</text>
</comment>
<comment type="PTM">
    <text evidence="4">Phosphorylated on Ser-172 by CDK1 during the cell cycle, from metaphase to telophase, but not in interphase. This phosphorylation inhibits tubulin incorporation into microtubules.</text>
</comment>
<comment type="PTM">
    <text evidence="7">Some glutamate residues at the C-terminus are polyglycylated, resulting in polyglycine chains on the gamma-carboxyl group. Glycylation is mainly limited to tubulin incorporated into axonemes (cilia and flagella) whereas glutamylation is prevalent in neuronal cells, centrioles, axonemes, and the mitotic spindle. Both modifications can coexist on the same protein on adjacent residues, and lowering polyglycylation levels increases polyglutamylation, and reciprocally. Cilia and flagella glycylation is required for their stability and maintenance. Flagella glycylation controls sperm motility.</text>
</comment>
<comment type="PTM">
    <text evidence="6 7">Some glutamate residues at the C-terminus are polyglutamylated, resulting in polyglutamate chains on the gamma-carboxyl group (By similarity). Polyglutamylation plays a key role in microtubule severing by spastin (SPAST). SPAST preferentially recognizes and acts on microtubules decorated with short polyglutamate tails: severing activity by SPAST increases as the number of glutamates per tubulin rises from one to eight, but decreases beyond this glutamylation threshold (By similarity). Glutamylation is also involved in cilia motility (By similarity).</text>
</comment>
<comment type="similarity">
    <text evidence="9">Belongs to the tubulin family.</text>
</comment>
<feature type="chain" id="PRO_0000048253" description="Tubulin beta-3 chain">
    <location>
        <begin position="1"/>
        <end position="450"/>
    </location>
</feature>
<feature type="region of interest" description="Disordered" evidence="8">
    <location>
        <begin position="425"/>
        <end position="450"/>
    </location>
</feature>
<feature type="short sequence motif" description="MREI motif" evidence="2">
    <location>
        <begin position="1"/>
        <end position="4"/>
    </location>
</feature>
<feature type="compositionally biased region" description="Acidic residues" evidence="8">
    <location>
        <begin position="429"/>
        <end position="450"/>
    </location>
</feature>
<feature type="binding site" evidence="4">
    <location>
        <position position="11"/>
    </location>
    <ligand>
        <name>GTP</name>
        <dbReference type="ChEBI" id="CHEBI:37565"/>
    </ligand>
</feature>
<feature type="binding site" evidence="3">
    <location>
        <position position="69"/>
    </location>
    <ligand>
        <name>GTP</name>
        <dbReference type="ChEBI" id="CHEBI:37565"/>
    </ligand>
</feature>
<feature type="binding site" evidence="3">
    <location>
        <position position="69"/>
    </location>
    <ligand>
        <name>Mg(2+)</name>
        <dbReference type="ChEBI" id="CHEBI:18420"/>
    </ligand>
</feature>
<feature type="binding site" evidence="4">
    <location>
        <position position="138"/>
    </location>
    <ligand>
        <name>GTP</name>
        <dbReference type="ChEBI" id="CHEBI:37565"/>
    </ligand>
</feature>
<feature type="binding site" evidence="4">
    <location>
        <position position="142"/>
    </location>
    <ligand>
        <name>GTP</name>
        <dbReference type="ChEBI" id="CHEBI:37565"/>
    </ligand>
</feature>
<feature type="binding site" evidence="4">
    <location>
        <position position="143"/>
    </location>
    <ligand>
        <name>GTP</name>
        <dbReference type="ChEBI" id="CHEBI:37565"/>
    </ligand>
</feature>
<feature type="binding site" evidence="4">
    <location>
        <position position="144"/>
    </location>
    <ligand>
        <name>GTP</name>
        <dbReference type="ChEBI" id="CHEBI:37565"/>
    </ligand>
</feature>
<feature type="binding site" evidence="4">
    <location>
        <position position="204"/>
    </location>
    <ligand>
        <name>GTP</name>
        <dbReference type="ChEBI" id="CHEBI:37565"/>
    </ligand>
</feature>
<feature type="binding site" evidence="4">
    <location>
        <position position="226"/>
    </location>
    <ligand>
        <name>GTP</name>
        <dbReference type="ChEBI" id="CHEBI:37565"/>
    </ligand>
</feature>
<feature type="modified residue" description="Phosphoserine; by CDK1" evidence="4">
    <location>
        <position position="172"/>
    </location>
</feature>
<feature type="modified residue" description="5-glutamyl polyglutamate" evidence="5">
    <location>
        <position position="438"/>
    </location>
</feature>
<feature type="modified residue" description="Phosphoserine" evidence="5">
    <location>
        <position position="444"/>
    </location>
</feature>
<reference key="1">
    <citation type="submission" date="2003-10" db="EMBL/GenBank/DDBJ databases">
        <title>Isolation and characterization of cDNA for macaque neurological disease genes.</title>
        <authorList>
            <person name="Kusuda J."/>
            <person name="Osada N."/>
            <person name="Tanuma R."/>
            <person name="Hirata M."/>
            <person name="Sugano S."/>
            <person name="Hashimoto K."/>
        </authorList>
    </citation>
    <scope>NUCLEOTIDE SEQUENCE [LARGE SCALE MRNA]</scope>
    <source>
        <tissue>Brain cortex</tissue>
    </source>
</reference>
<reference key="2">
    <citation type="submission" date="2005-06" db="EMBL/GenBank/DDBJ databases">
        <title>DNA sequences of macaque genes expressed in brain or testis and its evolutionary implications.</title>
        <authorList>
            <consortium name="International consortium for macaque cDNA sequencing and analysis"/>
        </authorList>
    </citation>
    <scope>NUCLEOTIDE SEQUENCE [LARGE SCALE MRNA]</scope>
    <source>
        <tissue>Brain cortex</tissue>
    </source>
</reference>
<dbReference type="EMBL" id="AB125205">
    <property type="protein sequence ID" value="BAD51993.1"/>
    <property type="molecule type" value="mRNA"/>
</dbReference>
<dbReference type="EMBL" id="AB169662">
    <property type="protein sequence ID" value="BAE01743.1"/>
    <property type="molecule type" value="mRNA"/>
</dbReference>
<dbReference type="RefSeq" id="NP_001270374.1">
    <property type="nucleotide sequence ID" value="NM_001283445.1"/>
</dbReference>
<dbReference type="RefSeq" id="XP_045238065.1">
    <property type="nucleotide sequence ID" value="XM_045382130.2"/>
</dbReference>
<dbReference type="SMR" id="Q60HC2"/>
<dbReference type="Ensembl" id="ENSMFAT00000016874.2">
    <property type="protein sequence ID" value="ENSMFAP00000042590.2"/>
    <property type="gene ID" value="ENSMFAG00000033629.2"/>
</dbReference>
<dbReference type="GeneID" id="101925940"/>
<dbReference type="VEuPathDB" id="HostDB:ENSMFAG00000033629"/>
<dbReference type="eggNOG" id="KOG1375">
    <property type="taxonomic scope" value="Eukaryota"/>
</dbReference>
<dbReference type="GeneTree" id="ENSGT00940000159115"/>
<dbReference type="OMA" id="CQDEMEG"/>
<dbReference type="Proteomes" id="UP000233100">
    <property type="component" value="Chromosome 20"/>
</dbReference>
<dbReference type="Bgee" id="ENSMFAG00000033629">
    <property type="expression patterns" value="Expressed in temporal lobe and 5 other cell types or tissues"/>
</dbReference>
<dbReference type="GO" id="GO:0005737">
    <property type="term" value="C:cytoplasm"/>
    <property type="evidence" value="ECO:0007669"/>
    <property type="project" value="UniProtKB-KW"/>
</dbReference>
<dbReference type="GO" id="GO:0030175">
    <property type="term" value="C:filopodium"/>
    <property type="evidence" value="ECO:0000250"/>
    <property type="project" value="UniProtKB"/>
</dbReference>
<dbReference type="GO" id="GO:0030426">
    <property type="term" value="C:growth cone"/>
    <property type="evidence" value="ECO:0000250"/>
    <property type="project" value="UniProtKB"/>
</dbReference>
<dbReference type="GO" id="GO:0045171">
    <property type="term" value="C:intercellular bridge"/>
    <property type="evidence" value="ECO:0007669"/>
    <property type="project" value="UniProtKB-ARBA"/>
</dbReference>
<dbReference type="GO" id="GO:0030027">
    <property type="term" value="C:lamellipodium"/>
    <property type="evidence" value="ECO:0000250"/>
    <property type="project" value="UniProtKB"/>
</dbReference>
<dbReference type="GO" id="GO:0005874">
    <property type="term" value="C:microtubule"/>
    <property type="evidence" value="ECO:0007669"/>
    <property type="project" value="UniProtKB-KW"/>
</dbReference>
<dbReference type="GO" id="GO:0015630">
    <property type="term" value="C:microtubule cytoskeleton"/>
    <property type="evidence" value="ECO:0000250"/>
    <property type="project" value="UniProtKB"/>
</dbReference>
<dbReference type="GO" id="GO:0072686">
    <property type="term" value="C:mitotic spindle"/>
    <property type="evidence" value="ECO:0007669"/>
    <property type="project" value="UniProtKB-ARBA"/>
</dbReference>
<dbReference type="GO" id="GO:0005525">
    <property type="term" value="F:GTP binding"/>
    <property type="evidence" value="ECO:0000250"/>
    <property type="project" value="UniProtKB"/>
</dbReference>
<dbReference type="GO" id="GO:0003924">
    <property type="term" value="F:GTPase activity"/>
    <property type="evidence" value="ECO:0007669"/>
    <property type="project" value="InterPro"/>
</dbReference>
<dbReference type="GO" id="GO:0046872">
    <property type="term" value="F:metal ion binding"/>
    <property type="evidence" value="ECO:0007669"/>
    <property type="project" value="UniProtKB-KW"/>
</dbReference>
<dbReference type="GO" id="GO:0005200">
    <property type="term" value="F:structural constituent of cytoskeleton"/>
    <property type="evidence" value="ECO:0000250"/>
    <property type="project" value="UniProtKB"/>
</dbReference>
<dbReference type="GO" id="GO:0007411">
    <property type="term" value="P:axon guidance"/>
    <property type="evidence" value="ECO:0000250"/>
    <property type="project" value="UniProtKB"/>
</dbReference>
<dbReference type="GO" id="GO:1990791">
    <property type="term" value="P:dorsal root ganglion development"/>
    <property type="evidence" value="ECO:0000250"/>
    <property type="project" value="UniProtKB"/>
</dbReference>
<dbReference type="GO" id="GO:0000226">
    <property type="term" value="P:microtubule cytoskeleton organization"/>
    <property type="evidence" value="ECO:0000250"/>
    <property type="project" value="UniProtKB"/>
</dbReference>
<dbReference type="GO" id="GO:0038007">
    <property type="term" value="P:netrin-activated signaling pathway"/>
    <property type="evidence" value="ECO:0000250"/>
    <property type="project" value="UniProtKB"/>
</dbReference>
<dbReference type="CDD" id="cd02187">
    <property type="entry name" value="beta_tubulin"/>
    <property type="match status" value="1"/>
</dbReference>
<dbReference type="FunFam" id="1.10.287.600:FF:000002">
    <property type="entry name" value="Tubulin beta chain"/>
    <property type="match status" value="1"/>
</dbReference>
<dbReference type="FunFam" id="3.30.1330.20:FF:000002">
    <property type="entry name" value="Tubulin beta chain"/>
    <property type="match status" value="1"/>
</dbReference>
<dbReference type="FunFam" id="3.40.50.1440:FF:000003">
    <property type="entry name" value="Tubulin beta chain"/>
    <property type="match status" value="1"/>
</dbReference>
<dbReference type="Gene3D" id="1.10.287.600">
    <property type="entry name" value="Helix hairpin bin"/>
    <property type="match status" value="1"/>
</dbReference>
<dbReference type="Gene3D" id="3.30.1330.20">
    <property type="entry name" value="Tubulin/FtsZ, C-terminal domain"/>
    <property type="match status" value="1"/>
</dbReference>
<dbReference type="Gene3D" id="3.40.50.1440">
    <property type="entry name" value="Tubulin/FtsZ, GTPase domain"/>
    <property type="match status" value="1"/>
</dbReference>
<dbReference type="InterPro" id="IPR013838">
    <property type="entry name" value="Beta-tubulin_BS"/>
</dbReference>
<dbReference type="InterPro" id="IPR002453">
    <property type="entry name" value="Beta_tubulin"/>
</dbReference>
<dbReference type="InterPro" id="IPR008280">
    <property type="entry name" value="Tub_FtsZ_C"/>
</dbReference>
<dbReference type="InterPro" id="IPR000217">
    <property type="entry name" value="Tubulin"/>
</dbReference>
<dbReference type="InterPro" id="IPR037103">
    <property type="entry name" value="Tubulin/FtsZ-like_C"/>
</dbReference>
<dbReference type="InterPro" id="IPR018316">
    <property type="entry name" value="Tubulin/FtsZ_2-layer-sand-dom"/>
</dbReference>
<dbReference type="InterPro" id="IPR036525">
    <property type="entry name" value="Tubulin/FtsZ_GTPase_sf"/>
</dbReference>
<dbReference type="InterPro" id="IPR023123">
    <property type="entry name" value="Tubulin_C"/>
</dbReference>
<dbReference type="InterPro" id="IPR017975">
    <property type="entry name" value="Tubulin_CS"/>
</dbReference>
<dbReference type="InterPro" id="IPR003008">
    <property type="entry name" value="Tubulin_FtsZ_GTPase"/>
</dbReference>
<dbReference type="PANTHER" id="PTHR11588">
    <property type="entry name" value="TUBULIN"/>
    <property type="match status" value="1"/>
</dbReference>
<dbReference type="Pfam" id="PF00091">
    <property type="entry name" value="Tubulin"/>
    <property type="match status" value="1"/>
</dbReference>
<dbReference type="Pfam" id="PF03953">
    <property type="entry name" value="Tubulin_C"/>
    <property type="match status" value="1"/>
</dbReference>
<dbReference type="PRINTS" id="PR01163">
    <property type="entry name" value="BETATUBULIN"/>
</dbReference>
<dbReference type="PRINTS" id="PR01161">
    <property type="entry name" value="TUBULIN"/>
</dbReference>
<dbReference type="SMART" id="SM00864">
    <property type="entry name" value="Tubulin"/>
    <property type="match status" value="1"/>
</dbReference>
<dbReference type="SMART" id="SM00865">
    <property type="entry name" value="Tubulin_C"/>
    <property type="match status" value="1"/>
</dbReference>
<dbReference type="SUPFAM" id="SSF55307">
    <property type="entry name" value="Tubulin C-terminal domain-like"/>
    <property type="match status" value="1"/>
</dbReference>
<dbReference type="SUPFAM" id="SSF52490">
    <property type="entry name" value="Tubulin nucleotide-binding domain-like"/>
    <property type="match status" value="1"/>
</dbReference>
<dbReference type="PROSITE" id="PS00227">
    <property type="entry name" value="TUBULIN"/>
    <property type="match status" value="1"/>
</dbReference>
<dbReference type="PROSITE" id="PS00228">
    <property type="entry name" value="TUBULIN_B_AUTOREG"/>
    <property type="match status" value="1"/>
</dbReference>
<evidence type="ECO:0000250" key="1"/>
<evidence type="ECO:0000250" key="2">
    <source>
        <dbReference type="UniProtKB" id="P07437"/>
    </source>
</evidence>
<evidence type="ECO:0000250" key="3">
    <source>
        <dbReference type="UniProtKB" id="P68363"/>
    </source>
</evidence>
<evidence type="ECO:0000250" key="4">
    <source>
        <dbReference type="UniProtKB" id="Q13509"/>
    </source>
</evidence>
<evidence type="ECO:0000250" key="5">
    <source>
        <dbReference type="UniProtKB" id="Q2T9S0"/>
    </source>
</evidence>
<evidence type="ECO:0000250" key="6">
    <source>
        <dbReference type="UniProtKB" id="Q71U36"/>
    </source>
</evidence>
<evidence type="ECO:0000250" key="7">
    <source>
        <dbReference type="UniProtKB" id="Q9ERD7"/>
    </source>
</evidence>
<evidence type="ECO:0000256" key="8">
    <source>
        <dbReference type="SAM" id="MobiDB-lite"/>
    </source>
</evidence>
<evidence type="ECO:0000305" key="9"/>
<sequence length="450" mass="50433">MREIVHIQAGQCGNQIGAKFWEVISDEHGIDPSGNYVGDSDLQLERISVYYNEASSHKYVPRAILVDLEPGTMDSVRSGAFGHLFRPDNFIFGQSGAGNNWAKGHYTEGAELVDSVLDVVRKECENCDCLQGFQLTHSLGGGTGSGMGTLLISKVREEYPDRIMNTFSVVPSPKVSDTVVEPYNATLSIHQLVENTDETYCIDNEALYDICFRTLKLATPTYGDLNHLVSATMSGVTTSLRFPGQLNADLRKLAVNMVPFPRLHFFMPGFAPLTARGSQQYRALTVPELTQQMFDAKNMMAACDPRHGRYLTVATVFRGRMSMKEVDEQMLAIQSKNSSYFVEWIPNNVKVAVCDIPPRGLKMSSTFIGNSTAIQELFKRISEQFTAMFRRKAFLHWYTGEGMDEMEFTEAESNMNDLVSEYQQYQDATAEEEGEMYEDDEEESEAQGPK</sequence>
<name>TBB3_MACFA</name>
<gene>
    <name type="primary">TUBB3</name>
    <name type="synonym">TUBB4</name>
    <name type="ORF">QccE-11995</name>
    <name type="ORF">QccE-15186</name>
</gene>